<evidence type="ECO:0000255" key="1">
    <source>
        <dbReference type="HAMAP-Rule" id="MF_03141"/>
    </source>
</evidence>
<evidence type="ECO:0000256" key="2">
    <source>
        <dbReference type="SAM" id="MobiDB-lite"/>
    </source>
</evidence>
<reference key="1">
    <citation type="journal article" date="2015" name="PLoS Genet.">
        <title>The dynamic genome and transcriptome of the human fungal pathogen Blastomyces and close relative Emmonsia.</title>
        <authorList>
            <person name="Munoz J.F."/>
            <person name="Gauthier G.M."/>
            <person name="Desjardins C.A."/>
            <person name="Gallo J.E."/>
            <person name="Holder J."/>
            <person name="Sullivan T.D."/>
            <person name="Marty A.J."/>
            <person name="Carmen J.C."/>
            <person name="Chen Z."/>
            <person name="Ding L."/>
            <person name="Gujja S."/>
            <person name="Magrini V."/>
            <person name="Misas E."/>
            <person name="Mitreva M."/>
            <person name="Priest M."/>
            <person name="Saif S."/>
            <person name="Whiston E.A."/>
            <person name="Young S."/>
            <person name="Zeng Q."/>
            <person name="Goldman W.E."/>
            <person name="Mardis E.R."/>
            <person name="Taylor J.W."/>
            <person name="McEwen J.G."/>
            <person name="Clay O.K."/>
            <person name="Klein B.S."/>
            <person name="Cuomo C.A."/>
        </authorList>
    </citation>
    <scope>NUCLEOTIDE SEQUENCE [LARGE SCALE GENOMIC DNA]</scope>
    <source>
        <strain>SLH14081</strain>
    </source>
</reference>
<gene>
    <name evidence="1" type="primary">PAC1</name>
    <name evidence="1" type="synonym">LIS1</name>
    <name type="ORF">BDBG_00274</name>
</gene>
<keyword id="KW-0131">Cell cycle</keyword>
<keyword id="KW-0132">Cell division</keyword>
<keyword id="KW-0175">Coiled coil</keyword>
<keyword id="KW-0963">Cytoplasm</keyword>
<keyword id="KW-0206">Cytoskeleton</keyword>
<keyword id="KW-0493">Microtubule</keyword>
<keyword id="KW-0498">Mitosis</keyword>
<keyword id="KW-1185">Reference proteome</keyword>
<keyword id="KW-0677">Repeat</keyword>
<keyword id="KW-0813">Transport</keyword>
<keyword id="KW-0853">WD repeat</keyword>
<proteinExistence type="inferred from homology"/>
<dbReference type="EMBL" id="GG657448">
    <property type="protein sequence ID" value="OAT03571.1"/>
    <property type="molecule type" value="Genomic_DNA"/>
</dbReference>
<dbReference type="RefSeq" id="XP_002629028.1">
    <property type="nucleotide sequence ID" value="XM_002628982.1"/>
</dbReference>
<dbReference type="SMR" id="C5JD40"/>
<dbReference type="STRING" id="559298.C5JD40"/>
<dbReference type="GeneID" id="8510809"/>
<dbReference type="KEGG" id="bgh:BDBG_00274"/>
<dbReference type="VEuPathDB" id="FungiDB:BDBG_00274"/>
<dbReference type="HOGENOM" id="CLU_000288_57_15_1"/>
<dbReference type="OrthoDB" id="10264588at2759"/>
<dbReference type="Proteomes" id="UP000002038">
    <property type="component" value="Unassembled WGS sequence"/>
</dbReference>
<dbReference type="GO" id="GO:0005737">
    <property type="term" value="C:cytoplasm"/>
    <property type="evidence" value="ECO:0007669"/>
    <property type="project" value="UniProtKB-UniRule"/>
</dbReference>
<dbReference type="GO" id="GO:0005874">
    <property type="term" value="C:microtubule"/>
    <property type="evidence" value="ECO:0007669"/>
    <property type="project" value="UniProtKB-KW"/>
</dbReference>
<dbReference type="GO" id="GO:0005875">
    <property type="term" value="C:microtubule associated complex"/>
    <property type="evidence" value="ECO:0007669"/>
    <property type="project" value="UniProtKB-UniRule"/>
</dbReference>
<dbReference type="GO" id="GO:0000922">
    <property type="term" value="C:spindle pole"/>
    <property type="evidence" value="ECO:0007669"/>
    <property type="project" value="UniProtKB-SubCell"/>
</dbReference>
<dbReference type="GO" id="GO:0070840">
    <property type="term" value="F:dynein complex binding"/>
    <property type="evidence" value="ECO:0007669"/>
    <property type="project" value="UniProtKB-UniRule"/>
</dbReference>
<dbReference type="GO" id="GO:0051301">
    <property type="term" value="P:cell division"/>
    <property type="evidence" value="ECO:0007669"/>
    <property type="project" value="UniProtKB-KW"/>
</dbReference>
<dbReference type="GO" id="GO:0000132">
    <property type="term" value="P:establishment of mitotic spindle orientation"/>
    <property type="evidence" value="ECO:0007669"/>
    <property type="project" value="UniProtKB-UniRule"/>
</dbReference>
<dbReference type="GO" id="GO:0051012">
    <property type="term" value="P:microtubule sliding"/>
    <property type="evidence" value="ECO:0007669"/>
    <property type="project" value="UniProtKB-UniRule"/>
</dbReference>
<dbReference type="CDD" id="cd00200">
    <property type="entry name" value="WD40"/>
    <property type="match status" value="1"/>
</dbReference>
<dbReference type="FunFam" id="1.20.960.30:FF:000002">
    <property type="entry name" value="Platelet-activating factor acetylhydrolase ib"/>
    <property type="match status" value="1"/>
</dbReference>
<dbReference type="Gene3D" id="1.20.960.30">
    <property type="match status" value="1"/>
</dbReference>
<dbReference type="Gene3D" id="2.130.10.10">
    <property type="entry name" value="YVTN repeat-like/Quinoprotein amine dehydrogenase"/>
    <property type="match status" value="1"/>
</dbReference>
<dbReference type="HAMAP" id="MF_03141">
    <property type="entry name" value="lis1"/>
    <property type="match status" value="1"/>
</dbReference>
<dbReference type="InterPro" id="IPR017252">
    <property type="entry name" value="Dynein_regulator_LIS1"/>
</dbReference>
<dbReference type="InterPro" id="IPR020472">
    <property type="entry name" value="G-protein_beta_WD-40_rep"/>
</dbReference>
<dbReference type="InterPro" id="IPR037190">
    <property type="entry name" value="LIS1_N"/>
</dbReference>
<dbReference type="InterPro" id="IPR006594">
    <property type="entry name" value="LisH"/>
</dbReference>
<dbReference type="InterPro" id="IPR056795">
    <property type="entry name" value="PAC1-like_LisH-like_dom"/>
</dbReference>
<dbReference type="InterPro" id="IPR015943">
    <property type="entry name" value="WD40/YVTN_repeat-like_dom_sf"/>
</dbReference>
<dbReference type="InterPro" id="IPR019775">
    <property type="entry name" value="WD40_repeat_CS"/>
</dbReference>
<dbReference type="InterPro" id="IPR036322">
    <property type="entry name" value="WD40_repeat_dom_sf"/>
</dbReference>
<dbReference type="InterPro" id="IPR001680">
    <property type="entry name" value="WD40_rpt"/>
</dbReference>
<dbReference type="PANTHER" id="PTHR19848:SF8">
    <property type="entry name" value="F-BOX AND WD REPEAT DOMAIN CONTAINING 7"/>
    <property type="match status" value="1"/>
</dbReference>
<dbReference type="PANTHER" id="PTHR19848">
    <property type="entry name" value="WD40 REPEAT PROTEIN"/>
    <property type="match status" value="1"/>
</dbReference>
<dbReference type="Pfam" id="PF24951">
    <property type="entry name" value="LisH_PAC1"/>
    <property type="match status" value="1"/>
</dbReference>
<dbReference type="Pfam" id="PF00400">
    <property type="entry name" value="WD40"/>
    <property type="match status" value="6"/>
</dbReference>
<dbReference type="PIRSF" id="PIRSF037647">
    <property type="entry name" value="Dynein_regulator_Lis1"/>
    <property type="match status" value="1"/>
</dbReference>
<dbReference type="PRINTS" id="PR00320">
    <property type="entry name" value="GPROTEINBRPT"/>
</dbReference>
<dbReference type="SMART" id="SM00320">
    <property type="entry name" value="WD40"/>
    <property type="match status" value="7"/>
</dbReference>
<dbReference type="SUPFAM" id="SSF109925">
    <property type="entry name" value="Lissencephaly-1 protein (Lis-1, PAF-AH alpha) N-terminal domain"/>
    <property type="match status" value="1"/>
</dbReference>
<dbReference type="SUPFAM" id="SSF50978">
    <property type="entry name" value="WD40 repeat-like"/>
    <property type="match status" value="1"/>
</dbReference>
<dbReference type="PROSITE" id="PS50896">
    <property type="entry name" value="LISH"/>
    <property type="match status" value="1"/>
</dbReference>
<dbReference type="PROSITE" id="PS00678">
    <property type="entry name" value="WD_REPEATS_1"/>
    <property type="match status" value="3"/>
</dbReference>
<dbReference type="PROSITE" id="PS50082">
    <property type="entry name" value="WD_REPEATS_2"/>
    <property type="match status" value="6"/>
</dbReference>
<dbReference type="PROSITE" id="PS50294">
    <property type="entry name" value="WD_REPEATS_REGION"/>
    <property type="match status" value="1"/>
</dbReference>
<comment type="function">
    <text evidence="1">Positively regulates the activity of the minus-end directed microtubule motor protein dynein. May enhance dynein-mediated microtubule sliding by targeting dynein to the microtubule plus end. Required for nuclear migration during vegetative growth as well as development. Required for retrograde early endosome (EE) transport from the hyphal tip. Required for localization of dynein to the mitotic spindle poles. Recruits additional proteins to the dynein complex at SPBs.</text>
</comment>
<comment type="subunit">
    <text evidence="1">Self-associates. Interacts with NDL1 and dynein.</text>
</comment>
<comment type="subcellular location">
    <subcellularLocation>
        <location evidence="1">Cytoplasm</location>
        <location evidence="1">Cytoskeleton</location>
    </subcellularLocation>
    <subcellularLocation>
        <location evidence="1">Cytoplasm</location>
        <location evidence="1">Cytoskeleton</location>
        <location evidence="1">Spindle pole</location>
    </subcellularLocation>
    <text evidence="1">Localizes to the plus ends of microtubules at the hyphal tip and the mitotic spindle poles.</text>
</comment>
<comment type="domain">
    <text evidence="1">Dimerization mediated by the LisH domain may be required to activate dynein.</text>
</comment>
<comment type="similarity">
    <text evidence="1">Belongs to the WD repeat LIS1/nudF family.</text>
</comment>
<organism>
    <name type="scientific">Blastomyces gilchristii (strain SLH14081)</name>
    <name type="common">Blastomyces dermatitidis</name>
    <dbReference type="NCBI Taxonomy" id="559298"/>
    <lineage>
        <taxon>Eukaryota</taxon>
        <taxon>Fungi</taxon>
        <taxon>Dikarya</taxon>
        <taxon>Ascomycota</taxon>
        <taxon>Pezizomycotina</taxon>
        <taxon>Eurotiomycetes</taxon>
        <taxon>Eurotiomycetidae</taxon>
        <taxon>Onygenales</taxon>
        <taxon>Ajellomycetaceae</taxon>
        <taxon>Blastomyces</taxon>
    </lineage>
</organism>
<sequence length="473" mass="51447">MSQLLTPRQAEELHKSIIAYFLSAKLPKSAAALREEIADSVQLDDSTAKKYEGLLEKKWTSVVRLQKKIMDLEARNSALQSELDSATPTSLSRRNQDPVSWLPRAPARHRLESHRNPVTSVAFHPVFSSLASGSEDTTIKIWDWELGELERTIKGHTRAVVDVDYGGPHGGTLLASCSSDLTIKLWDPSDEYKNIRTLPGHDHSVSAVRFIPSGAAGSPLSGNLLVSASRDKTLRIWDVTTGYCVRTLHGHVEWVRDVVPSPDGRFLFSAGDDRVARLWDVSSGETKSTFLGHEHFIECVALAPPTTYPYLAALAGLKKPPPPSSSAEYVATGSRDKTIRVWDSRGTLIKTLIGHDNWVRALVFHPGGKYLLSVSDDKTIRCWDLSQEFKCVRVVTDAHAFVTCIRWAPNIIKDAGGMGVNGDINGGGSLALSGVNGIIPGSKKEDPGGGAKLGIRCVIATGSVDLNVRVFAS</sequence>
<feature type="chain" id="PRO_0000405063" description="Nuclear distribution protein PAC1">
    <location>
        <begin position="1"/>
        <end position="473"/>
    </location>
</feature>
<feature type="domain" description="LisH" evidence="1">
    <location>
        <begin position="9"/>
        <end position="41"/>
    </location>
</feature>
<feature type="repeat" description="WD 1">
    <location>
        <begin position="113"/>
        <end position="154"/>
    </location>
</feature>
<feature type="repeat" description="WD 2">
    <location>
        <begin position="156"/>
        <end position="196"/>
    </location>
</feature>
<feature type="repeat" description="WD 3">
    <location>
        <begin position="200"/>
        <end position="247"/>
    </location>
</feature>
<feature type="repeat" description="WD 4">
    <location>
        <begin position="250"/>
        <end position="289"/>
    </location>
</feature>
<feature type="repeat" description="WD 5">
    <location>
        <begin position="292"/>
        <end position="352"/>
    </location>
</feature>
<feature type="repeat" description="WD 6">
    <location>
        <begin position="354"/>
        <end position="393"/>
    </location>
</feature>
<feature type="repeat" description="WD 7">
    <location>
        <begin position="397"/>
        <end position="434"/>
    </location>
</feature>
<feature type="repeat" description="WD 8">
    <location>
        <begin position="435"/>
        <end position="472"/>
    </location>
</feature>
<feature type="region of interest" description="Disordered" evidence="2">
    <location>
        <begin position="80"/>
        <end position="99"/>
    </location>
</feature>
<feature type="coiled-coil region" evidence="1">
    <location>
        <begin position="60"/>
        <end position="87"/>
    </location>
</feature>
<feature type="compositionally biased region" description="Polar residues" evidence="2">
    <location>
        <begin position="80"/>
        <end position="93"/>
    </location>
</feature>
<name>LIS1_BLAGS</name>
<accession>C5JD40</accession>
<accession>A0A179U9F4</accession>
<protein>
    <recommendedName>
        <fullName evidence="1">Nuclear distribution protein PAC1</fullName>
    </recommendedName>
    <alternativeName>
        <fullName evidence="1">Lissencephaly-1 homolog</fullName>
        <shortName evidence="1">LIS-1</shortName>
    </alternativeName>
    <alternativeName>
        <fullName evidence="1">nudF homolog</fullName>
    </alternativeName>
</protein>